<reference evidence="12" key="1">
    <citation type="submission" date="2000-04" db="EMBL/GenBank/DDBJ databases">
        <title>Isolation of full-length cDNA clones from mouse brain cDNA library made by oligo-capping method.</title>
        <authorList>
            <person name="Osada N."/>
            <person name="Kusuda J."/>
            <person name="Tanuma R."/>
            <person name="Ito A."/>
            <person name="Hirata M."/>
            <person name="Sugano S."/>
            <person name="Hashimoto K."/>
        </authorList>
    </citation>
    <scope>NUCLEOTIDE SEQUENCE [LARGE SCALE MRNA]</scope>
    <source>
        <strain evidence="12">C57BL/6J</strain>
        <tissue evidence="12">Brain</tissue>
    </source>
</reference>
<reference evidence="8" key="2">
    <citation type="journal article" date="2005" name="Science">
        <title>The transcriptional landscape of the mammalian genome.</title>
        <authorList>
            <person name="Carninci P."/>
            <person name="Kasukawa T."/>
            <person name="Katayama S."/>
            <person name="Gough J."/>
            <person name="Frith M.C."/>
            <person name="Maeda N."/>
            <person name="Oyama R."/>
            <person name="Ravasi T."/>
            <person name="Lenhard B."/>
            <person name="Wells C."/>
            <person name="Kodzius R."/>
            <person name="Shimokawa K."/>
            <person name="Bajic V.B."/>
            <person name="Brenner S.E."/>
            <person name="Batalov S."/>
            <person name="Forrest A.R."/>
            <person name="Zavolan M."/>
            <person name="Davis M.J."/>
            <person name="Wilming L.G."/>
            <person name="Aidinis V."/>
            <person name="Allen J.E."/>
            <person name="Ambesi-Impiombato A."/>
            <person name="Apweiler R."/>
            <person name="Aturaliya R.N."/>
            <person name="Bailey T.L."/>
            <person name="Bansal M."/>
            <person name="Baxter L."/>
            <person name="Beisel K.W."/>
            <person name="Bersano T."/>
            <person name="Bono H."/>
            <person name="Chalk A.M."/>
            <person name="Chiu K.P."/>
            <person name="Choudhary V."/>
            <person name="Christoffels A."/>
            <person name="Clutterbuck D.R."/>
            <person name="Crowe M.L."/>
            <person name="Dalla E."/>
            <person name="Dalrymple B.P."/>
            <person name="de Bono B."/>
            <person name="Della Gatta G."/>
            <person name="di Bernardo D."/>
            <person name="Down T."/>
            <person name="Engstrom P."/>
            <person name="Fagiolini M."/>
            <person name="Faulkner G."/>
            <person name="Fletcher C.F."/>
            <person name="Fukushima T."/>
            <person name="Furuno M."/>
            <person name="Futaki S."/>
            <person name="Gariboldi M."/>
            <person name="Georgii-Hemming P."/>
            <person name="Gingeras T.R."/>
            <person name="Gojobori T."/>
            <person name="Green R.E."/>
            <person name="Gustincich S."/>
            <person name="Harbers M."/>
            <person name="Hayashi Y."/>
            <person name="Hensch T.K."/>
            <person name="Hirokawa N."/>
            <person name="Hill D."/>
            <person name="Huminiecki L."/>
            <person name="Iacono M."/>
            <person name="Ikeo K."/>
            <person name="Iwama A."/>
            <person name="Ishikawa T."/>
            <person name="Jakt M."/>
            <person name="Kanapin A."/>
            <person name="Katoh M."/>
            <person name="Kawasawa Y."/>
            <person name="Kelso J."/>
            <person name="Kitamura H."/>
            <person name="Kitano H."/>
            <person name="Kollias G."/>
            <person name="Krishnan S.P."/>
            <person name="Kruger A."/>
            <person name="Kummerfeld S.K."/>
            <person name="Kurochkin I.V."/>
            <person name="Lareau L.F."/>
            <person name="Lazarevic D."/>
            <person name="Lipovich L."/>
            <person name="Liu J."/>
            <person name="Liuni S."/>
            <person name="McWilliam S."/>
            <person name="Madan Babu M."/>
            <person name="Madera M."/>
            <person name="Marchionni L."/>
            <person name="Matsuda H."/>
            <person name="Matsuzawa S."/>
            <person name="Miki H."/>
            <person name="Mignone F."/>
            <person name="Miyake S."/>
            <person name="Morris K."/>
            <person name="Mottagui-Tabar S."/>
            <person name="Mulder N."/>
            <person name="Nakano N."/>
            <person name="Nakauchi H."/>
            <person name="Ng P."/>
            <person name="Nilsson R."/>
            <person name="Nishiguchi S."/>
            <person name="Nishikawa S."/>
            <person name="Nori F."/>
            <person name="Ohara O."/>
            <person name="Okazaki Y."/>
            <person name="Orlando V."/>
            <person name="Pang K.C."/>
            <person name="Pavan W.J."/>
            <person name="Pavesi G."/>
            <person name="Pesole G."/>
            <person name="Petrovsky N."/>
            <person name="Piazza S."/>
            <person name="Reed J."/>
            <person name="Reid J.F."/>
            <person name="Ring B.Z."/>
            <person name="Ringwald M."/>
            <person name="Rost B."/>
            <person name="Ruan Y."/>
            <person name="Salzberg S.L."/>
            <person name="Sandelin A."/>
            <person name="Schneider C."/>
            <person name="Schoenbach C."/>
            <person name="Sekiguchi K."/>
            <person name="Semple C.A."/>
            <person name="Seno S."/>
            <person name="Sessa L."/>
            <person name="Sheng Y."/>
            <person name="Shibata Y."/>
            <person name="Shimada H."/>
            <person name="Shimada K."/>
            <person name="Silva D."/>
            <person name="Sinclair B."/>
            <person name="Sperling S."/>
            <person name="Stupka E."/>
            <person name="Sugiura K."/>
            <person name="Sultana R."/>
            <person name="Takenaka Y."/>
            <person name="Taki K."/>
            <person name="Tammoja K."/>
            <person name="Tan S.L."/>
            <person name="Tang S."/>
            <person name="Taylor M.S."/>
            <person name="Tegner J."/>
            <person name="Teichmann S.A."/>
            <person name="Ueda H.R."/>
            <person name="van Nimwegen E."/>
            <person name="Verardo R."/>
            <person name="Wei C.L."/>
            <person name="Yagi K."/>
            <person name="Yamanishi H."/>
            <person name="Zabarovsky E."/>
            <person name="Zhu S."/>
            <person name="Zimmer A."/>
            <person name="Hide W."/>
            <person name="Bult C."/>
            <person name="Grimmond S.M."/>
            <person name="Teasdale R.D."/>
            <person name="Liu E.T."/>
            <person name="Brusic V."/>
            <person name="Quackenbush J."/>
            <person name="Wahlestedt C."/>
            <person name="Mattick J.S."/>
            <person name="Hume D.A."/>
            <person name="Kai C."/>
            <person name="Sasaki D."/>
            <person name="Tomaru Y."/>
            <person name="Fukuda S."/>
            <person name="Kanamori-Katayama M."/>
            <person name="Suzuki M."/>
            <person name="Aoki J."/>
            <person name="Arakawa T."/>
            <person name="Iida J."/>
            <person name="Imamura K."/>
            <person name="Itoh M."/>
            <person name="Kato T."/>
            <person name="Kawaji H."/>
            <person name="Kawagashira N."/>
            <person name="Kawashima T."/>
            <person name="Kojima M."/>
            <person name="Kondo S."/>
            <person name="Konno H."/>
            <person name="Nakano K."/>
            <person name="Ninomiya N."/>
            <person name="Nishio T."/>
            <person name="Okada M."/>
            <person name="Plessy C."/>
            <person name="Shibata K."/>
            <person name="Shiraki T."/>
            <person name="Suzuki S."/>
            <person name="Tagami M."/>
            <person name="Waki K."/>
            <person name="Watahiki A."/>
            <person name="Okamura-Oho Y."/>
            <person name="Suzuki H."/>
            <person name="Kawai J."/>
            <person name="Hayashizaki Y."/>
        </authorList>
    </citation>
    <scope>NUCLEOTIDE SEQUENCE [LARGE SCALE MRNA]</scope>
    <source>
        <strain evidence="8">C57BL/6J</strain>
        <strain evidence="14">NOD</strain>
        <tissue evidence="13">Blastocyst</tissue>
        <tissue evidence="10">Cecum</tissue>
        <tissue evidence="14">Dendritic cell</tissue>
        <tissue evidence="9">Embryo</tissue>
        <tissue evidence="11">Embryonic testis</tissue>
        <tissue evidence="8">Tongue</tissue>
    </source>
</reference>
<reference evidence="7" key="3">
    <citation type="journal article" date="2004" name="Genome Res.">
        <title>The status, quality, and expansion of the NIH full-length cDNA project: the Mammalian Gene Collection (MGC).</title>
        <authorList>
            <consortium name="The MGC Project Team"/>
        </authorList>
    </citation>
    <scope>NUCLEOTIDE SEQUENCE [LARGE SCALE MRNA]</scope>
    <source>
        <tissue evidence="7">Mammary tumor</tissue>
    </source>
</reference>
<reference evidence="6" key="4">
    <citation type="journal article" date="2004" name="Mol. Cell. Biol.">
        <title>PAM14, a novel MRG- and Rb-associated protein, is not required for development and T-cell function in mice.</title>
        <authorList>
            <person name="Tominaga K."/>
            <person name="Magee D.M."/>
            <person name="Matzuk M.M."/>
            <person name="Pereira-Smith O.M."/>
        </authorList>
    </citation>
    <scope>IDENTIFICATION IN A COMPLEX WITH MORF4L1 AND RB1</scope>
    <scope>TISSUE SPECIFICITY</scope>
    <scope>DISRUPTION PHENOTYPE</scope>
</reference>
<feature type="chain" id="PRO_0000306177" description="MORF4 family-associated protein 1">
    <location>
        <begin position="1"/>
        <end position="125"/>
    </location>
</feature>
<feature type="region of interest" description="Disordered" evidence="4">
    <location>
        <begin position="76"/>
        <end position="99"/>
    </location>
</feature>
<feature type="coiled-coil region" evidence="3">
    <location>
        <begin position="94"/>
        <end position="124"/>
    </location>
</feature>
<dbReference type="EMBL" id="AB041651">
    <property type="protein sequence ID" value="BAB93545.1"/>
    <property type="molecule type" value="mRNA"/>
</dbReference>
<dbReference type="EMBL" id="AK009827">
    <property type="protein sequence ID" value="BAB26527.1"/>
    <property type="molecule type" value="mRNA"/>
</dbReference>
<dbReference type="EMBL" id="AK017832">
    <property type="protein sequence ID" value="BAB30963.1"/>
    <property type="molecule type" value="mRNA"/>
</dbReference>
<dbReference type="EMBL" id="AK018675">
    <property type="protein sequence ID" value="BAB31337.1"/>
    <property type="molecule type" value="mRNA"/>
</dbReference>
<dbReference type="EMBL" id="AK020049">
    <property type="protein sequence ID" value="BAB31978.1"/>
    <property type="status" value="ALT_FRAME"/>
    <property type="molecule type" value="mRNA"/>
</dbReference>
<dbReference type="EMBL" id="AK159464">
    <property type="protein sequence ID" value="BAE35105.1"/>
    <property type="molecule type" value="mRNA"/>
</dbReference>
<dbReference type="EMBL" id="AK167112">
    <property type="protein sequence ID" value="BAE39260.1"/>
    <property type="molecule type" value="mRNA"/>
</dbReference>
<dbReference type="EMBL" id="AK170789">
    <property type="protein sequence ID" value="BAE42029.1"/>
    <property type="molecule type" value="mRNA"/>
</dbReference>
<dbReference type="EMBL" id="AK170909">
    <property type="protein sequence ID" value="BAE42107.1"/>
    <property type="molecule type" value="mRNA"/>
</dbReference>
<dbReference type="EMBL" id="AK170984">
    <property type="protein sequence ID" value="BAE42158.1"/>
    <property type="molecule type" value="mRNA"/>
</dbReference>
<dbReference type="EMBL" id="BC010209">
    <property type="protein sequence ID" value="AAH10209.1"/>
    <property type="molecule type" value="mRNA"/>
</dbReference>
<dbReference type="CCDS" id="CCDS19242.1"/>
<dbReference type="RefSeq" id="NP_080518.1">
    <property type="nucleotide sequence ID" value="NM_026242.3"/>
</dbReference>
<dbReference type="SMR" id="Q9CQL7"/>
<dbReference type="BioGRID" id="212280">
    <property type="interactions" value="4"/>
</dbReference>
<dbReference type="FunCoup" id="Q9CQL7">
    <property type="interactions" value="935"/>
</dbReference>
<dbReference type="IntAct" id="Q9CQL7">
    <property type="interactions" value="1"/>
</dbReference>
<dbReference type="STRING" id="10090.ENSMUSP00000067135"/>
<dbReference type="iPTMnet" id="Q9CQL7"/>
<dbReference type="PhosphoSitePlus" id="Q9CQL7"/>
<dbReference type="PaxDb" id="10090-ENSMUSP00000067135"/>
<dbReference type="ProteomicsDB" id="295577"/>
<dbReference type="Pumba" id="Q9CQL7"/>
<dbReference type="DNASU" id="67568"/>
<dbReference type="Ensembl" id="ENSMUST00000068795.4">
    <property type="protein sequence ID" value="ENSMUSP00000067135.4"/>
    <property type="gene ID" value="ENSMUSG00000055302.6"/>
</dbReference>
<dbReference type="GeneID" id="67568"/>
<dbReference type="KEGG" id="mmu:67568"/>
<dbReference type="UCSC" id="uc008xfa.2">
    <property type="organism name" value="mouse"/>
</dbReference>
<dbReference type="AGR" id="MGI:1914818"/>
<dbReference type="CTD" id="93621"/>
<dbReference type="MGI" id="MGI:1914818">
    <property type="gene designation" value="Mrfap1"/>
</dbReference>
<dbReference type="VEuPathDB" id="HostDB:ENSMUSG00000055302"/>
<dbReference type="eggNOG" id="ENOG502RU25">
    <property type="taxonomic scope" value="Eukaryota"/>
</dbReference>
<dbReference type="GeneTree" id="ENSGT00940000155541"/>
<dbReference type="HOGENOM" id="CLU_166966_1_0_1"/>
<dbReference type="InParanoid" id="Q9CQL7"/>
<dbReference type="OMA" id="RVTKRCE"/>
<dbReference type="OrthoDB" id="9837479at2759"/>
<dbReference type="PhylomeDB" id="Q9CQL7"/>
<dbReference type="TreeFam" id="TF338232"/>
<dbReference type="BioGRID-ORCS" id="67568">
    <property type="hits" value="1 hit in 71 CRISPR screens"/>
</dbReference>
<dbReference type="ChiTaRS" id="Mrfap1">
    <property type="organism name" value="mouse"/>
</dbReference>
<dbReference type="PRO" id="PR:Q9CQL7"/>
<dbReference type="Proteomes" id="UP000000589">
    <property type="component" value="Chromosome 5"/>
</dbReference>
<dbReference type="RNAct" id="Q9CQL7">
    <property type="molecule type" value="protein"/>
</dbReference>
<dbReference type="Bgee" id="ENSMUSG00000055302">
    <property type="expression patterns" value="Expressed in ectoplacental cone and 62 other cell types or tissues"/>
</dbReference>
<dbReference type="GO" id="GO:0005634">
    <property type="term" value="C:nucleus"/>
    <property type="evidence" value="ECO:0007669"/>
    <property type="project" value="UniProtKB-SubCell"/>
</dbReference>
<dbReference type="GO" id="GO:0048471">
    <property type="term" value="C:perinuclear region of cytoplasm"/>
    <property type="evidence" value="ECO:0007669"/>
    <property type="project" value="UniProtKB-SubCell"/>
</dbReference>
<dbReference type="InterPro" id="IPR029254">
    <property type="entry name" value="MRFAP1"/>
</dbReference>
<dbReference type="PANTHER" id="PTHR31324:SF1">
    <property type="entry name" value="MORF4 FAMILY-ASSOCIATED PROTEIN 1"/>
    <property type="match status" value="1"/>
</dbReference>
<dbReference type="PANTHER" id="PTHR31324">
    <property type="entry name" value="MORF4 FAMILY-ASSOCIATED PROTEIN 1-RELATED"/>
    <property type="match status" value="1"/>
</dbReference>
<dbReference type="Pfam" id="PF15155">
    <property type="entry name" value="MRFAP1"/>
    <property type="match status" value="1"/>
</dbReference>
<name>MOFA1_MOUSE</name>
<organism>
    <name type="scientific">Mus musculus</name>
    <name type="common">Mouse</name>
    <dbReference type="NCBI Taxonomy" id="10090"/>
    <lineage>
        <taxon>Eukaryota</taxon>
        <taxon>Metazoa</taxon>
        <taxon>Chordata</taxon>
        <taxon>Craniata</taxon>
        <taxon>Vertebrata</taxon>
        <taxon>Euteleostomi</taxon>
        <taxon>Mammalia</taxon>
        <taxon>Eutheria</taxon>
        <taxon>Euarchontoglires</taxon>
        <taxon>Glires</taxon>
        <taxon>Rodentia</taxon>
        <taxon>Myomorpha</taxon>
        <taxon>Muroidea</taxon>
        <taxon>Muridae</taxon>
        <taxon>Murinae</taxon>
        <taxon>Mus</taxon>
        <taxon>Mus</taxon>
    </lineage>
</organism>
<keyword id="KW-0175">Coiled coil</keyword>
<keyword id="KW-0963">Cytoplasm</keyword>
<keyword id="KW-0539">Nucleus</keyword>
<keyword id="KW-1185">Reference proteome</keyword>
<evidence type="ECO:0000250" key="1">
    <source>
        <dbReference type="UniProtKB" id="Q5M820"/>
    </source>
</evidence>
<evidence type="ECO:0000250" key="2">
    <source>
        <dbReference type="UniProtKB" id="Q9Y605"/>
    </source>
</evidence>
<evidence type="ECO:0000255" key="3"/>
<evidence type="ECO:0000256" key="4">
    <source>
        <dbReference type="SAM" id="MobiDB-lite"/>
    </source>
</evidence>
<evidence type="ECO:0000269" key="5">
    <source>
    </source>
</evidence>
<evidence type="ECO:0000305" key="6"/>
<evidence type="ECO:0000312" key="7">
    <source>
        <dbReference type="EMBL" id="AAH10209.1"/>
    </source>
</evidence>
<evidence type="ECO:0000312" key="8">
    <source>
        <dbReference type="EMBL" id="BAB26527.1"/>
    </source>
</evidence>
<evidence type="ECO:0000312" key="9">
    <source>
        <dbReference type="EMBL" id="BAB30963.1"/>
    </source>
</evidence>
<evidence type="ECO:0000312" key="10">
    <source>
        <dbReference type="EMBL" id="BAB31337.1"/>
    </source>
</evidence>
<evidence type="ECO:0000312" key="11">
    <source>
        <dbReference type="EMBL" id="BAB31978.1"/>
    </source>
</evidence>
<evidence type="ECO:0000312" key="12">
    <source>
        <dbReference type="EMBL" id="BAB93545.1"/>
    </source>
</evidence>
<evidence type="ECO:0000312" key="13">
    <source>
        <dbReference type="EMBL" id="BAE39260.1"/>
    </source>
</evidence>
<evidence type="ECO:0000312" key="14">
    <source>
        <dbReference type="EMBL" id="BAE42029.1"/>
    </source>
</evidence>
<evidence type="ECO:0000312" key="15">
    <source>
        <dbReference type="MGI" id="MGI:1914818"/>
    </source>
</evidence>
<comment type="subunit">
    <text evidence="1 2 5">Found in a complex composed of MORF4L1, MRFAP1 and RB1. Interacts via its N-terminus with MORF4L1. Interacts with CSTB and MORF4L2.</text>
</comment>
<comment type="subcellular location">
    <subcellularLocation>
        <location evidence="2">Nucleus</location>
    </subcellularLocation>
    <subcellularLocation>
        <location evidence="2">Cytoplasm</location>
        <location evidence="2">Perinuclear region</location>
    </subcellularLocation>
    <text evidence="2">Colocalizes with MORF4L1 to cell nuclei.</text>
</comment>
<comment type="tissue specificity">
    <text evidence="5">Widely expressed in all tissues examined and as early as 7 days during embryonic development.</text>
</comment>
<comment type="disruption phenotype">
    <text evidence="5">Male mice are viable, fertile and show normal T-cell function.</text>
</comment>
<comment type="similarity">
    <text evidence="6">Belongs to the MORF4 family-associated protein family.</text>
</comment>
<comment type="sequence caution" evidence="6">
    <conflict type="frameshift">
        <sequence resource="EMBL-CDS" id="BAB31978"/>
    </conflict>
</comment>
<gene>
    <name evidence="15" type="primary">Mrfap1</name>
    <name type="synonym">Pam14</name>
    <name type="ORF">MNCb-1039</name>
</gene>
<sequence>MRPLDAVELAEPEEVEVLEPEEDFEQFLLPVIHEMREDIASLTRERGRAPARNRGKLWEMDNMLIQIKTQVEASEESALNHLQGAGGAEPRGPRAEKADEKAQEMAKMAEMLVQLVRRIEKSESS</sequence>
<protein>
    <recommendedName>
        <fullName>MORF4 family-associated protein 1</fullName>
    </recommendedName>
    <alternativeName>
        <fullName>Protein associated with MRG of 14 kDa</fullName>
    </alternativeName>
</protein>
<proteinExistence type="evidence at protein level"/>
<accession>Q9CQL7</accession>
<accession>Q9CX68</accession>